<comment type="function">
    <text evidence="1">Part of the phosphoribosylformylglycinamidine synthase complex involved in the purines biosynthetic pathway. Catalyzes the ATP-dependent conversion of formylglycinamide ribonucleotide (FGAR) and glutamine to yield formylglycinamidine ribonucleotide (FGAM) and glutamate. The FGAM synthase complex is composed of three subunits. PurQ produces an ammonia molecule by converting glutamine to glutamate. PurL transfers the ammonia molecule to FGAR to form FGAM in an ATP-dependent manner. PurS interacts with PurQ and PurL and is thought to assist in the transfer of the ammonia molecule from PurQ to PurL.</text>
</comment>
<comment type="catalytic activity">
    <reaction evidence="1">
        <text>N(2)-formyl-N(1)-(5-phospho-beta-D-ribosyl)glycinamide + L-glutamine + ATP + H2O = 2-formamido-N(1)-(5-O-phospho-beta-D-ribosyl)acetamidine + L-glutamate + ADP + phosphate + H(+)</text>
        <dbReference type="Rhea" id="RHEA:17129"/>
        <dbReference type="ChEBI" id="CHEBI:15377"/>
        <dbReference type="ChEBI" id="CHEBI:15378"/>
        <dbReference type="ChEBI" id="CHEBI:29985"/>
        <dbReference type="ChEBI" id="CHEBI:30616"/>
        <dbReference type="ChEBI" id="CHEBI:43474"/>
        <dbReference type="ChEBI" id="CHEBI:58359"/>
        <dbReference type="ChEBI" id="CHEBI:147286"/>
        <dbReference type="ChEBI" id="CHEBI:147287"/>
        <dbReference type="ChEBI" id="CHEBI:456216"/>
        <dbReference type="EC" id="6.3.5.3"/>
    </reaction>
</comment>
<comment type="pathway">
    <text evidence="1">Purine metabolism; IMP biosynthesis via de novo pathway; 5-amino-1-(5-phospho-D-ribosyl)imidazole from N(2)-formyl-N(1)-(5-phospho-D-ribosyl)glycinamide: step 1/2.</text>
</comment>
<comment type="subunit">
    <text evidence="1">Monomer. Part of the FGAM synthase complex composed of 1 PurL, 1 PurQ and 2 PurS subunits.</text>
</comment>
<comment type="subcellular location">
    <subcellularLocation>
        <location evidence="1">Cytoplasm</location>
    </subcellularLocation>
</comment>
<comment type="similarity">
    <text evidence="1">Belongs to the FGAMS family.</text>
</comment>
<organism>
    <name type="scientific">Brucella abortus (strain 2308)</name>
    <dbReference type="NCBI Taxonomy" id="359391"/>
    <lineage>
        <taxon>Bacteria</taxon>
        <taxon>Pseudomonadati</taxon>
        <taxon>Pseudomonadota</taxon>
        <taxon>Alphaproteobacteria</taxon>
        <taxon>Hyphomicrobiales</taxon>
        <taxon>Brucellaceae</taxon>
        <taxon>Brucella/Ochrobactrum group</taxon>
        <taxon>Brucella</taxon>
    </lineage>
</organism>
<keyword id="KW-0067">ATP-binding</keyword>
<keyword id="KW-0963">Cytoplasm</keyword>
<keyword id="KW-0436">Ligase</keyword>
<keyword id="KW-0460">Magnesium</keyword>
<keyword id="KW-0479">Metal-binding</keyword>
<keyword id="KW-0547">Nucleotide-binding</keyword>
<keyword id="KW-0658">Purine biosynthesis</keyword>
<keyword id="KW-1185">Reference proteome</keyword>
<protein>
    <recommendedName>
        <fullName evidence="1">Phosphoribosylformylglycinamidine synthase subunit PurL</fullName>
        <shortName evidence="1">FGAM synthase</shortName>
        <ecNumber evidence="1">6.3.5.3</ecNumber>
    </recommendedName>
    <alternativeName>
        <fullName evidence="1">Formylglycinamide ribonucleotide amidotransferase subunit II</fullName>
        <shortName evidence="1">FGAR amidotransferase II</shortName>
        <shortName evidence="1">FGAR-AT II</shortName>
    </alternativeName>
    <alternativeName>
        <fullName evidence="1">Glutamine amidotransferase PurL</fullName>
    </alternativeName>
    <alternativeName>
        <fullName evidence="1">Phosphoribosylformylglycinamidine synthase subunit II</fullName>
    </alternativeName>
</protein>
<name>PURL_BRUA2</name>
<sequence length="740" mass="79148">MTISNTRDITPELIEAHGLKPDEYQRILELIGREPTFTELGIFSAMWNEHCSYKSSKKWLRTLPTSGPRVIQGPGENAGVVDIGDGDCVVFKMESHNHPSYIEPYQGAATGVGGILRDVFTMGARPVAAMNALRFGEPDHPKTRHLVSGVVSGVGGYGNAFGVPTVGGEVNFDKRYNGNILVNAFAAGLARHDGIFLSEAEGVGLPVVYLGAKTSRDGVGGATMASAEFDESIEEKRPTVQVGDPFTEKCLLEACLELMASGAVIAIQDMGAAGLTCSAVEMGAKGDLGIELILDHVPVREENMTAYEMMLSESQERMLMVLKPEKEAEAQAIFRKWGLDFAIVGKTTDDLRFRVIHQGEEVANLPIKDLGDEAPEYDRPWMEPGKHAPLPASNVPQVEDYSAALLKLIGSPDLSSRRWVYEQYDTLIQGNSLQVPGGDAGVIRVEGHETKALAFSSDVTPRYCEADPFEGGKQAVAECWRNITATGAEPLASTDNLNFGNPEKPEIMGQLVKAIEGIGEACRALDFPIVSGNVSLYNETNGQAILPTPTIAGVGLLPDWSQMAKIGGMQDGDTLVLLGGDGTHLGQSVYLRDLFDRADGPAPFVDLALEKRNGEFVRSAIRNGQVTACHDLSDGGLAIAVAEMAIKSGKGATLDAGDGLPHALLFGEDQARYVISATPEMAKLIALNAEGAGVPFRILGTVGGDRLKISKNVDVSVADLTQAYEGWFPNFMNGELTGNN</sequence>
<accession>Q2YNG6</accession>
<proteinExistence type="inferred from homology"/>
<reference key="1">
    <citation type="journal article" date="2005" name="Infect. Immun.">
        <title>Whole-genome analyses of speciation events in pathogenic Brucellae.</title>
        <authorList>
            <person name="Chain P.S."/>
            <person name="Comerci D.J."/>
            <person name="Tolmasky M.E."/>
            <person name="Larimer F.W."/>
            <person name="Malfatti S.A."/>
            <person name="Vergez L.M."/>
            <person name="Aguero F."/>
            <person name="Land M.L."/>
            <person name="Ugalde R.A."/>
            <person name="Garcia E."/>
        </authorList>
    </citation>
    <scope>NUCLEOTIDE SEQUENCE [LARGE SCALE GENOMIC DNA]</scope>
    <source>
        <strain>2308</strain>
    </source>
</reference>
<feature type="chain" id="PRO_0000236649" description="Phosphoribosylformylglycinamidine synthase subunit PurL">
    <location>
        <begin position="1"/>
        <end position="740"/>
    </location>
</feature>
<feature type="active site" evidence="1">
    <location>
        <position position="50"/>
    </location>
</feature>
<feature type="active site" description="Proton acceptor" evidence="1">
    <location>
        <position position="96"/>
    </location>
</feature>
<feature type="binding site" evidence="1">
    <location>
        <position position="53"/>
    </location>
    <ligand>
        <name>ATP</name>
        <dbReference type="ChEBI" id="CHEBI:30616"/>
    </ligand>
</feature>
<feature type="binding site" evidence="1">
    <location>
        <position position="92"/>
    </location>
    <ligand>
        <name>ATP</name>
        <dbReference type="ChEBI" id="CHEBI:30616"/>
    </ligand>
</feature>
<feature type="binding site" evidence="1">
    <location>
        <position position="94"/>
    </location>
    <ligand>
        <name>Mg(2+)</name>
        <dbReference type="ChEBI" id="CHEBI:18420"/>
        <label>1</label>
    </ligand>
</feature>
<feature type="binding site" evidence="1">
    <location>
        <begin position="95"/>
        <end position="98"/>
    </location>
    <ligand>
        <name>substrate</name>
    </ligand>
</feature>
<feature type="binding site" evidence="1">
    <location>
        <position position="117"/>
    </location>
    <ligand>
        <name>substrate</name>
    </ligand>
</feature>
<feature type="binding site" evidence="1">
    <location>
        <position position="118"/>
    </location>
    <ligand>
        <name>Mg(2+)</name>
        <dbReference type="ChEBI" id="CHEBI:18420"/>
        <label>2</label>
    </ligand>
</feature>
<feature type="binding site" evidence="1">
    <location>
        <position position="241"/>
    </location>
    <ligand>
        <name>substrate</name>
    </ligand>
</feature>
<feature type="binding site" evidence="1">
    <location>
        <position position="269"/>
    </location>
    <ligand>
        <name>Mg(2+)</name>
        <dbReference type="ChEBI" id="CHEBI:18420"/>
        <label>2</label>
    </ligand>
</feature>
<feature type="binding site" evidence="1">
    <location>
        <begin position="313"/>
        <end position="315"/>
    </location>
    <ligand>
        <name>substrate</name>
    </ligand>
</feature>
<feature type="binding site" evidence="1">
    <location>
        <position position="495"/>
    </location>
    <ligand>
        <name>ATP</name>
        <dbReference type="ChEBI" id="CHEBI:30616"/>
    </ligand>
</feature>
<feature type="binding site" evidence="1">
    <location>
        <position position="532"/>
    </location>
    <ligand>
        <name>ATP</name>
        <dbReference type="ChEBI" id="CHEBI:30616"/>
    </ligand>
</feature>
<feature type="binding site" evidence="1">
    <location>
        <position position="533"/>
    </location>
    <ligand>
        <name>Mg(2+)</name>
        <dbReference type="ChEBI" id="CHEBI:18420"/>
        <label>1</label>
    </ligand>
</feature>
<feature type="binding site" evidence="1">
    <location>
        <position position="535"/>
    </location>
    <ligand>
        <name>substrate</name>
    </ligand>
</feature>
<dbReference type="EC" id="6.3.5.3" evidence="1"/>
<dbReference type="EMBL" id="AM040264">
    <property type="protein sequence ID" value="CAJ10813.1"/>
    <property type="molecule type" value="Genomic_DNA"/>
</dbReference>
<dbReference type="RefSeq" id="WP_002966777.1">
    <property type="nucleotide sequence ID" value="NZ_KN046823.1"/>
</dbReference>
<dbReference type="SMR" id="Q2YNG6"/>
<dbReference type="STRING" id="359391.BAB1_0857"/>
<dbReference type="GeneID" id="93016781"/>
<dbReference type="KEGG" id="bmf:BAB1_0857"/>
<dbReference type="PATRIC" id="fig|359391.11.peg.3166"/>
<dbReference type="HOGENOM" id="CLU_003100_0_1_5"/>
<dbReference type="UniPathway" id="UPA00074">
    <property type="reaction ID" value="UER00128"/>
</dbReference>
<dbReference type="Proteomes" id="UP000002719">
    <property type="component" value="Chromosome I"/>
</dbReference>
<dbReference type="GO" id="GO:0005737">
    <property type="term" value="C:cytoplasm"/>
    <property type="evidence" value="ECO:0007669"/>
    <property type="project" value="UniProtKB-SubCell"/>
</dbReference>
<dbReference type="GO" id="GO:0005524">
    <property type="term" value="F:ATP binding"/>
    <property type="evidence" value="ECO:0007669"/>
    <property type="project" value="UniProtKB-UniRule"/>
</dbReference>
<dbReference type="GO" id="GO:0000287">
    <property type="term" value="F:magnesium ion binding"/>
    <property type="evidence" value="ECO:0007669"/>
    <property type="project" value="UniProtKB-UniRule"/>
</dbReference>
<dbReference type="GO" id="GO:0004642">
    <property type="term" value="F:phosphoribosylformylglycinamidine synthase activity"/>
    <property type="evidence" value="ECO:0007669"/>
    <property type="project" value="UniProtKB-UniRule"/>
</dbReference>
<dbReference type="GO" id="GO:0006189">
    <property type="term" value="P:'de novo' IMP biosynthetic process"/>
    <property type="evidence" value="ECO:0007669"/>
    <property type="project" value="UniProtKB-UniRule"/>
</dbReference>
<dbReference type="CDD" id="cd02203">
    <property type="entry name" value="PurL_repeat1"/>
    <property type="match status" value="1"/>
</dbReference>
<dbReference type="CDD" id="cd02204">
    <property type="entry name" value="PurL_repeat2"/>
    <property type="match status" value="1"/>
</dbReference>
<dbReference type="FunFam" id="3.30.1330.10:FF:000004">
    <property type="entry name" value="Phosphoribosylformylglycinamidine synthase subunit PurL"/>
    <property type="match status" value="1"/>
</dbReference>
<dbReference type="Gene3D" id="3.90.650.10">
    <property type="entry name" value="PurM-like C-terminal domain"/>
    <property type="match status" value="2"/>
</dbReference>
<dbReference type="Gene3D" id="3.30.1330.10">
    <property type="entry name" value="PurM-like, N-terminal domain"/>
    <property type="match status" value="2"/>
</dbReference>
<dbReference type="HAMAP" id="MF_00420">
    <property type="entry name" value="PurL_2"/>
    <property type="match status" value="1"/>
</dbReference>
<dbReference type="InterPro" id="IPR010074">
    <property type="entry name" value="PRibForGlyAmidine_synth_PurL"/>
</dbReference>
<dbReference type="InterPro" id="IPR041609">
    <property type="entry name" value="PurL_linker"/>
</dbReference>
<dbReference type="InterPro" id="IPR010918">
    <property type="entry name" value="PurM-like_C_dom"/>
</dbReference>
<dbReference type="InterPro" id="IPR036676">
    <property type="entry name" value="PurM-like_C_sf"/>
</dbReference>
<dbReference type="InterPro" id="IPR016188">
    <property type="entry name" value="PurM-like_N"/>
</dbReference>
<dbReference type="InterPro" id="IPR036921">
    <property type="entry name" value="PurM-like_N_sf"/>
</dbReference>
<dbReference type="NCBIfam" id="TIGR01736">
    <property type="entry name" value="FGAM_synth_II"/>
    <property type="match status" value="1"/>
</dbReference>
<dbReference type="NCBIfam" id="NF002290">
    <property type="entry name" value="PRK01213.1"/>
    <property type="match status" value="1"/>
</dbReference>
<dbReference type="PANTHER" id="PTHR43555">
    <property type="entry name" value="PHOSPHORIBOSYLFORMYLGLYCINAMIDINE SYNTHASE SUBUNIT PURL"/>
    <property type="match status" value="1"/>
</dbReference>
<dbReference type="PANTHER" id="PTHR43555:SF1">
    <property type="entry name" value="PHOSPHORIBOSYLFORMYLGLYCINAMIDINE SYNTHASE SUBUNIT PURL"/>
    <property type="match status" value="1"/>
</dbReference>
<dbReference type="Pfam" id="PF00586">
    <property type="entry name" value="AIRS"/>
    <property type="match status" value="2"/>
</dbReference>
<dbReference type="Pfam" id="PF02769">
    <property type="entry name" value="AIRS_C"/>
    <property type="match status" value="2"/>
</dbReference>
<dbReference type="Pfam" id="PF18072">
    <property type="entry name" value="FGAR-AT_linker"/>
    <property type="match status" value="1"/>
</dbReference>
<dbReference type="PIRSF" id="PIRSF001587">
    <property type="entry name" value="FGAM_synthase_II"/>
    <property type="match status" value="1"/>
</dbReference>
<dbReference type="SUPFAM" id="SSF56042">
    <property type="entry name" value="PurM C-terminal domain-like"/>
    <property type="match status" value="2"/>
</dbReference>
<dbReference type="SUPFAM" id="SSF55326">
    <property type="entry name" value="PurM N-terminal domain-like"/>
    <property type="match status" value="2"/>
</dbReference>
<gene>
    <name evidence="1" type="primary">purL</name>
    <name type="ordered locus">BAB1_0857</name>
</gene>
<evidence type="ECO:0000255" key="1">
    <source>
        <dbReference type="HAMAP-Rule" id="MF_00420"/>
    </source>
</evidence>